<evidence type="ECO:0000250" key="1"/>
<evidence type="ECO:0000255" key="2"/>
<evidence type="ECO:0000255" key="3">
    <source>
        <dbReference type="PROSITE-ProRule" id="PRU10040"/>
    </source>
</evidence>
<evidence type="ECO:0000305" key="4"/>
<accession>A2QK82</accession>
<proteinExistence type="inferred from homology"/>
<protein>
    <recommendedName>
        <fullName>Probable pectinesterase A</fullName>
        <ecNumber>3.1.1.11</ecNumber>
    </recommendedName>
    <alternativeName>
        <fullName>Pectin methylesterase A</fullName>
    </alternativeName>
</protein>
<gene>
    <name type="primary">pmeA</name>
    <name type="ORF">An04g09690</name>
</gene>
<reference key="1">
    <citation type="journal article" date="2007" name="Nat. Biotechnol.">
        <title>Genome sequencing and analysis of the versatile cell factory Aspergillus niger CBS 513.88.</title>
        <authorList>
            <person name="Pel H.J."/>
            <person name="de Winde J.H."/>
            <person name="Archer D.B."/>
            <person name="Dyer P.S."/>
            <person name="Hofmann G."/>
            <person name="Schaap P.J."/>
            <person name="Turner G."/>
            <person name="de Vries R.P."/>
            <person name="Albang R."/>
            <person name="Albermann K."/>
            <person name="Andersen M.R."/>
            <person name="Bendtsen J.D."/>
            <person name="Benen J.A.E."/>
            <person name="van den Berg M."/>
            <person name="Breestraat S."/>
            <person name="Caddick M.X."/>
            <person name="Contreras R."/>
            <person name="Cornell M."/>
            <person name="Coutinho P.M."/>
            <person name="Danchin E.G.J."/>
            <person name="Debets A.J.M."/>
            <person name="Dekker P."/>
            <person name="van Dijck P.W.M."/>
            <person name="van Dijk A."/>
            <person name="Dijkhuizen L."/>
            <person name="Driessen A.J.M."/>
            <person name="d'Enfert C."/>
            <person name="Geysens S."/>
            <person name="Goosen C."/>
            <person name="Groot G.S.P."/>
            <person name="de Groot P.W.J."/>
            <person name="Guillemette T."/>
            <person name="Henrissat B."/>
            <person name="Herweijer M."/>
            <person name="van den Hombergh J.P.T.W."/>
            <person name="van den Hondel C.A.M.J.J."/>
            <person name="van der Heijden R.T.J.M."/>
            <person name="van der Kaaij R.M."/>
            <person name="Klis F.M."/>
            <person name="Kools H.J."/>
            <person name="Kubicek C.P."/>
            <person name="van Kuyk P.A."/>
            <person name="Lauber J."/>
            <person name="Lu X."/>
            <person name="van der Maarel M.J.E.C."/>
            <person name="Meulenberg R."/>
            <person name="Menke H."/>
            <person name="Mortimer M.A."/>
            <person name="Nielsen J."/>
            <person name="Oliver S.G."/>
            <person name="Olsthoorn M."/>
            <person name="Pal K."/>
            <person name="van Peij N.N.M.E."/>
            <person name="Ram A.F.J."/>
            <person name="Rinas U."/>
            <person name="Roubos J.A."/>
            <person name="Sagt C.M.J."/>
            <person name="Schmoll M."/>
            <person name="Sun J."/>
            <person name="Ussery D."/>
            <person name="Varga J."/>
            <person name="Vervecken W."/>
            <person name="van de Vondervoort P.J.J."/>
            <person name="Wedler H."/>
            <person name="Woesten H.A.B."/>
            <person name="Zeng A.-P."/>
            <person name="van Ooyen A.J.J."/>
            <person name="Visser J."/>
            <person name="Stam H."/>
        </authorList>
    </citation>
    <scope>NUCLEOTIDE SEQUENCE [LARGE SCALE GENOMIC DNA]</scope>
    <source>
        <strain>ATCC MYA-4892 / CBS 513.88 / FGSC A1513</strain>
    </source>
</reference>
<sequence length="327" mass="34623">MHTPYLLGALAALAATAVGAPAEHIKKRESRTSAPSGCLTVGSDGTYSTIGDALDALGSSTSSACIYVASGTYEEQLTIDYAGNLTLYGETTDTSTYKDNVVTITHTISSSDAGSLDKSATVNVVSDGFSMYNINVENGYGEGAQAVALVGNADQLGFYGCQFSGYQDTLYVKAGTQYYSNCMIEGAVDYIFGDASVWFGECDIVSNGAGAITASSRETSSDSGWYAIDNCNIKAASGVSLTEEVYLGRPWRVLARVIYQNSVLSDIINPKGWTTMADGATPLYYEYNNSGAGSDTSDREYETSISAAVDKTTVLGETWGDWIDRSY</sequence>
<keyword id="KW-0063">Aspartyl esterase</keyword>
<keyword id="KW-0961">Cell wall biogenesis/degradation</keyword>
<keyword id="KW-0325">Glycoprotein</keyword>
<keyword id="KW-0378">Hydrolase</keyword>
<keyword id="KW-1185">Reference proteome</keyword>
<keyword id="KW-0964">Secreted</keyword>
<keyword id="KW-0732">Signal</keyword>
<comment type="function">
    <text evidence="1">Involved in maceration and soft-rotting of plant tissue.</text>
</comment>
<comment type="catalytic activity">
    <reaction>
        <text>[(1-&gt;4)-alpha-D-galacturonosyl methyl ester](n) + n H2O = [(1-&gt;4)-alpha-D-galacturonosyl](n) + n methanol + n H(+)</text>
        <dbReference type="Rhea" id="RHEA:22380"/>
        <dbReference type="Rhea" id="RHEA-COMP:14570"/>
        <dbReference type="Rhea" id="RHEA-COMP:14573"/>
        <dbReference type="ChEBI" id="CHEBI:15377"/>
        <dbReference type="ChEBI" id="CHEBI:15378"/>
        <dbReference type="ChEBI" id="CHEBI:17790"/>
        <dbReference type="ChEBI" id="CHEBI:140522"/>
        <dbReference type="ChEBI" id="CHEBI:140523"/>
        <dbReference type="EC" id="3.1.1.11"/>
    </reaction>
</comment>
<comment type="pathway">
    <text>Glycan metabolism; pectin degradation; 2-dehydro-3-deoxy-D-gluconate from pectin: step 1/5.</text>
</comment>
<comment type="subcellular location">
    <subcellularLocation>
        <location evidence="1">Secreted</location>
    </subcellularLocation>
</comment>
<comment type="similarity">
    <text evidence="4">Belongs to the pectinesterase family.</text>
</comment>
<dbReference type="EC" id="3.1.1.11"/>
<dbReference type="EMBL" id="AM270096">
    <property type="protein sequence ID" value="CAK47976.1"/>
    <property type="molecule type" value="Genomic_DNA"/>
</dbReference>
<dbReference type="RefSeq" id="XP_001402325.1">
    <property type="nucleotide sequence ID" value="XM_001402288.2"/>
</dbReference>
<dbReference type="SMR" id="A2QK82"/>
<dbReference type="GlyCosmos" id="A2QK82">
    <property type="glycosylation" value="2 sites, No reported glycans"/>
</dbReference>
<dbReference type="EnsemblFungi" id="CAK47976">
    <property type="protein sequence ID" value="CAK47976"/>
    <property type="gene ID" value="An04g09690"/>
</dbReference>
<dbReference type="GeneID" id="4991372"/>
<dbReference type="KEGG" id="ang:An04g09690"/>
<dbReference type="HOGENOM" id="CLU_012243_1_2_1"/>
<dbReference type="UniPathway" id="UPA00545">
    <property type="reaction ID" value="UER00823"/>
</dbReference>
<dbReference type="Proteomes" id="UP000006706">
    <property type="component" value="Chromosome 6L"/>
</dbReference>
<dbReference type="GO" id="GO:0005576">
    <property type="term" value="C:extracellular region"/>
    <property type="evidence" value="ECO:0007669"/>
    <property type="project" value="UniProtKB-SubCell"/>
</dbReference>
<dbReference type="GO" id="GO:0030599">
    <property type="term" value="F:pectinesterase activity"/>
    <property type="evidence" value="ECO:0007669"/>
    <property type="project" value="UniProtKB-EC"/>
</dbReference>
<dbReference type="GO" id="GO:0042545">
    <property type="term" value="P:cell wall modification"/>
    <property type="evidence" value="ECO:0007669"/>
    <property type="project" value="InterPro"/>
</dbReference>
<dbReference type="GO" id="GO:0045490">
    <property type="term" value="P:pectin catabolic process"/>
    <property type="evidence" value="ECO:0007669"/>
    <property type="project" value="UniProtKB-UniPathway"/>
</dbReference>
<dbReference type="FunFam" id="2.160.20.10:FF:000014">
    <property type="entry name" value="Pectinesterase"/>
    <property type="match status" value="1"/>
</dbReference>
<dbReference type="Gene3D" id="2.160.20.10">
    <property type="entry name" value="Single-stranded right-handed beta-helix, Pectin lyase-like"/>
    <property type="match status" value="1"/>
</dbReference>
<dbReference type="InterPro" id="IPR012334">
    <property type="entry name" value="Pectin_lyas_fold"/>
</dbReference>
<dbReference type="InterPro" id="IPR011050">
    <property type="entry name" value="Pectin_lyase_fold/virulence"/>
</dbReference>
<dbReference type="InterPro" id="IPR033131">
    <property type="entry name" value="Pectinesterase_Asp_AS"/>
</dbReference>
<dbReference type="InterPro" id="IPR000070">
    <property type="entry name" value="Pectinesterase_cat"/>
</dbReference>
<dbReference type="PANTHER" id="PTHR31321">
    <property type="entry name" value="ACYL-COA THIOESTER HYDROLASE YBHC-RELATED"/>
    <property type="match status" value="1"/>
</dbReference>
<dbReference type="PANTHER" id="PTHR31321:SF57">
    <property type="entry name" value="PECTINESTERASE 53-RELATED"/>
    <property type="match status" value="1"/>
</dbReference>
<dbReference type="Pfam" id="PF01095">
    <property type="entry name" value="Pectinesterase"/>
    <property type="match status" value="1"/>
</dbReference>
<dbReference type="SUPFAM" id="SSF51126">
    <property type="entry name" value="Pectin lyase-like"/>
    <property type="match status" value="1"/>
</dbReference>
<dbReference type="PROSITE" id="PS00503">
    <property type="entry name" value="PECTINESTERASE_2"/>
    <property type="match status" value="1"/>
</dbReference>
<name>PMEA_ASPNC</name>
<organism>
    <name type="scientific">Aspergillus niger (strain ATCC MYA-4892 / CBS 513.88 / FGSC A1513)</name>
    <dbReference type="NCBI Taxonomy" id="425011"/>
    <lineage>
        <taxon>Eukaryota</taxon>
        <taxon>Fungi</taxon>
        <taxon>Dikarya</taxon>
        <taxon>Ascomycota</taxon>
        <taxon>Pezizomycotina</taxon>
        <taxon>Eurotiomycetes</taxon>
        <taxon>Eurotiomycetidae</taxon>
        <taxon>Eurotiales</taxon>
        <taxon>Aspergillaceae</taxon>
        <taxon>Aspergillus</taxon>
        <taxon>Aspergillus subgen. Circumdati</taxon>
    </lineage>
</organism>
<feature type="signal peptide" evidence="2">
    <location>
        <begin position="1"/>
        <end position="19"/>
    </location>
</feature>
<feature type="chain" id="PRO_5000219959" description="Probable pectinesterase A">
    <location>
        <begin position="20"/>
        <end position="327"/>
    </location>
</feature>
<feature type="active site" description="Proton donor" evidence="3">
    <location>
        <position position="168"/>
    </location>
</feature>
<feature type="active site" description="Nucleophile" evidence="3">
    <location>
        <position position="189"/>
    </location>
</feature>
<feature type="binding site" evidence="1">
    <location>
        <position position="145"/>
    </location>
    <ligand>
        <name>substrate</name>
    </ligand>
</feature>
<feature type="binding site" evidence="1">
    <location>
        <position position="249"/>
    </location>
    <ligand>
        <name>substrate</name>
    </ligand>
</feature>
<feature type="binding site" evidence="1">
    <location>
        <position position="251"/>
    </location>
    <ligand>
        <name>substrate</name>
    </ligand>
</feature>
<feature type="site" description="Transition state stabilizer" evidence="1">
    <location>
        <position position="167"/>
    </location>
</feature>
<feature type="glycosylation site" description="N-linked (GlcNAc...) asparagine" evidence="2">
    <location>
        <position position="84"/>
    </location>
</feature>
<feature type="glycosylation site" description="N-linked (GlcNAc...) asparagine" evidence="2">
    <location>
        <position position="288"/>
    </location>
</feature>